<proteinExistence type="evidence at transcript level"/>
<feature type="chain" id="PRO_0000216543" description="Putative gustatory receptor 93c">
    <location>
        <begin position="1"/>
        <end position="397"/>
    </location>
</feature>
<feature type="topological domain" description="Cytoplasmic" evidence="1">
    <location>
        <begin position="1"/>
        <end position="12"/>
    </location>
</feature>
<feature type="transmembrane region" description="Helical; Name=1" evidence="2">
    <location>
        <begin position="13"/>
        <end position="33"/>
    </location>
</feature>
<feature type="topological domain" description="Extracellular" evidence="1">
    <location>
        <begin position="34"/>
        <end position="87"/>
    </location>
</feature>
<feature type="transmembrane region" description="Helical; Name=2" evidence="2">
    <location>
        <begin position="88"/>
        <end position="108"/>
    </location>
</feature>
<feature type="topological domain" description="Cytoplasmic" evidence="1">
    <location>
        <begin position="109"/>
        <end position="141"/>
    </location>
</feature>
<feature type="transmembrane region" description="Helical; Name=3" evidence="2">
    <location>
        <begin position="142"/>
        <end position="162"/>
    </location>
</feature>
<feature type="topological domain" description="Extracellular" evidence="1">
    <location>
        <begin position="163"/>
        <end position="179"/>
    </location>
</feature>
<feature type="transmembrane region" description="Helical; Name=4" evidence="2">
    <location>
        <begin position="180"/>
        <end position="200"/>
    </location>
</feature>
<feature type="topological domain" description="Cytoplasmic" evidence="1">
    <location>
        <begin position="201"/>
        <end position="266"/>
    </location>
</feature>
<feature type="transmembrane region" description="Helical; Name=5" evidence="2">
    <location>
        <begin position="267"/>
        <end position="287"/>
    </location>
</feature>
<feature type="topological domain" description="Extracellular" evidence="1">
    <location>
        <begin position="288"/>
        <end position="295"/>
    </location>
</feature>
<feature type="transmembrane region" description="Helical; Name=6" evidence="2">
    <location>
        <begin position="296"/>
        <end position="316"/>
    </location>
</feature>
<feature type="topological domain" description="Cytoplasmic" evidence="1">
    <location>
        <begin position="317"/>
        <end position="371"/>
    </location>
</feature>
<feature type="transmembrane region" description="Helical; Name=7" evidence="2">
    <location>
        <begin position="372"/>
        <end position="392"/>
    </location>
</feature>
<feature type="topological domain" description="Extracellular" evidence="1">
    <location>
        <begin position="393"/>
        <end position="397"/>
    </location>
</feature>
<accession>Q9VD74</accession>
<evidence type="ECO:0000250" key="1"/>
<evidence type="ECO:0000255" key="2"/>
<evidence type="ECO:0000269" key="3">
    <source>
    </source>
</evidence>
<evidence type="ECO:0000269" key="4">
    <source>
    </source>
</evidence>
<evidence type="ECO:0000305" key="5"/>
<evidence type="ECO:0000312" key="6">
    <source>
        <dbReference type="EMBL" id="AAF55925.2"/>
    </source>
</evidence>
<comment type="function">
    <text evidence="1">Probable gustatory receptor which mediates acceptance or avoidance behavior, depending on its substrates.</text>
</comment>
<comment type="subcellular location">
    <subcellularLocation>
        <location evidence="1">Cell membrane</location>
        <topology evidence="1">Multi-pass membrane protein</topology>
    </subcellularLocation>
</comment>
<comment type="tissue specificity">
    <text evidence="4">In larvae, is expressed in neurons of the posterior pharyngeal sense organ.</text>
</comment>
<comment type="similarity">
    <text evidence="5">Belongs to the insect chemoreceptor superfamily. Gustatory receptor (GR) family. Gr93a subfamily.</text>
</comment>
<dbReference type="EMBL" id="AE014297">
    <property type="protein sequence ID" value="AAF55925.2"/>
    <property type="molecule type" value="Genomic_DNA"/>
</dbReference>
<dbReference type="RefSeq" id="NP_732665.1">
    <property type="nucleotide sequence ID" value="NM_169973.1"/>
</dbReference>
<dbReference type="SMR" id="Q9VD74"/>
<dbReference type="FunCoup" id="Q9VD74">
    <property type="interactions" value="15"/>
</dbReference>
<dbReference type="IntAct" id="Q9VD74">
    <property type="interactions" value="2"/>
</dbReference>
<dbReference type="STRING" id="7227.FBpp0083557"/>
<dbReference type="PaxDb" id="7227-FBpp0083557"/>
<dbReference type="EnsemblMetazoa" id="FBtr0084159">
    <property type="protein sequence ID" value="FBpp0083557"/>
    <property type="gene ID" value="FBgn0045469"/>
</dbReference>
<dbReference type="GeneID" id="117471"/>
<dbReference type="KEGG" id="dme:Dmel_CG31173"/>
<dbReference type="AGR" id="FB:FBgn0045469"/>
<dbReference type="CTD" id="117471"/>
<dbReference type="FlyBase" id="FBgn0045469">
    <property type="gene designation" value="Gr93c"/>
</dbReference>
<dbReference type="VEuPathDB" id="VectorBase:FBgn0045469"/>
<dbReference type="eggNOG" id="ENOG502TCT7">
    <property type="taxonomic scope" value="Eukaryota"/>
</dbReference>
<dbReference type="GeneTree" id="ENSGT00540000073758"/>
<dbReference type="HOGENOM" id="CLU_059451_0_0_1"/>
<dbReference type="InParanoid" id="Q9VD74"/>
<dbReference type="OMA" id="YRVDECI"/>
<dbReference type="OrthoDB" id="8009671at2759"/>
<dbReference type="PhylomeDB" id="Q9VD74"/>
<dbReference type="BioGRID-ORCS" id="117471">
    <property type="hits" value="0 hits in 1 CRISPR screen"/>
</dbReference>
<dbReference type="GenomeRNAi" id="117471"/>
<dbReference type="PRO" id="PR:Q9VD74"/>
<dbReference type="Proteomes" id="UP000000803">
    <property type="component" value="Chromosome 3R"/>
</dbReference>
<dbReference type="ExpressionAtlas" id="Q9VD74">
    <property type="expression patterns" value="baseline and differential"/>
</dbReference>
<dbReference type="GO" id="GO:0030424">
    <property type="term" value="C:axon"/>
    <property type="evidence" value="ECO:0000318"/>
    <property type="project" value="GO_Central"/>
</dbReference>
<dbReference type="GO" id="GO:0030425">
    <property type="term" value="C:dendrite"/>
    <property type="evidence" value="ECO:0000318"/>
    <property type="project" value="GO_Central"/>
</dbReference>
<dbReference type="GO" id="GO:0016020">
    <property type="term" value="C:membrane"/>
    <property type="evidence" value="ECO:0000303"/>
    <property type="project" value="UniProtKB"/>
</dbReference>
<dbReference type="GO" id="GO:0043025">
    <property type="term" value="C:neuronal cell body"/>
    <property type="evidence" value="ECO:0000318"/>
    <property type="project" value="GO_Central"/>
</dbReference>
<dbReference type="GO" id="GO:0005886">
    <property type="term" value="C:plasma membrane"/>
    <property type="evidence" value="ECO:0000250"/>
    <property type="project" value="FlyBase"/>
</dbReference>
<dbReference type="GO" id="GO:0015276">
    <property type="term" value="F:ligand-gated monoatomic ion channel activity"/>
    <property type="evidence" value="ECO:0000250"/>
    <property type="project" value="FlyBase"/>
</dbReference>
<dbReference type="GO" id="GO:0008527">
    <property type="term" value="F:taste receptor activity"/>
    <property type="evidence" value="ECO:0000303"/>
    <property type="project" value="UniProtKB"/>
</dbReference>
<dbReference type="GO" id="GO:0007635">
    <property type="term" value="P:chemosensory behavior"/>
    <property type="evidence" value="ECO:0000318"/>
    <property type="project" value="GO_Central"/>
</dbReference>
<dbReference type="GO" id="GO:0008049">
    <property type="term" value="P:male courtship behavior"/>
    <property type="evidence" value="ECO:0000318"/>
    <property type="project" value="GO_Central"/>
</dbReference>
<dbReference type="GO" id="GO:0034220">
    <property type="term" value="P:monoatomic ion transmembrane transport"/>
    <property type="evidence" value="ECO:0000250"/>
    <property type="project" value="FlyBase"/>
</dbReference>
<dbReference type="GO" id="GO:0050909">
    <property type="term" value="P:sensory perception of taste"/>
    <property type="evidence" value="ECO:0000303"/>
    <property type="project" value="UniProtKB"/>
</dbReference>
<dbReference type="GO" id="GO:0007165">
    <property type="term" value="P:signal transduction"/>
    <property type="evidence" value="ECO:0007669"/>
    <property type="project" value="UniProtKB-KW"/>
</dbReference>
<dbReference type="InterPro" id="IPR013604">
    <property type="entry name" value="7TM_chemorcpt"/>
</dbReference>
<dbReference type="Pfam" id="PF08395">
    <property type="entry name" value="7tm_7"/>
    <property type="match status" value="1"/>
</dbReference>
<name>GR93C_DROME</name>
<keyword id="KW-1003">Cell membrane</keyword>
<keyword id="KW-0472">Membrane</keyword>
<keyword id="KW-0675">Receptor</keyword>
<keyword id="KW-1185">Reference proteome</keyword>
<keyword id="KW-0807">Transducer</keyword>
<keyword id="KW-0812">Transmembrane</keyword>
<keyword id="KW-1133">Transmembrane helix</keyword>
<gene>
    <name type="primary">Gr93c</name>
    <name type="synonym">GR93F.3</name>
    <name type="ORF">CG31173</name>
</gene>
<organism evidence="6">
    <name type="scientific">Drosophila melanogaster</name>
    <name type="common">Fruit fly</name>
    <dbReference type="NCBI Taxonomy" id="7227"/>
    <lineage>
        <taxon>Eukaryota</taxon>
        <taxon>Metazoa</taxon>
        <taxon>Ecdysozoa</taxon>
        <taxon>Arthropoda</taxon>
        <taxon>Hexapoda</taxon>
        <taxon>Insecta</taxon>
        <taxon>Pterygota</taxon>
        <taxon>Neoptera</taxon>
        <taxon>Endopterygota</taxon>
        <taxon>Diptera</taxon>
        <taxon>Brachycera</taxon>
        <taxon>Muscomorpha</taxon>
        <taxon>Ephydroidea</taxon>
        <taxon>Drosophilidae</taxon>
        <taxon>Drosophila</taxon>
        <taxon>Sophophora</taxon>
    </lineage>
</organism>
<reference evidence="5" key="1">
    <citation type="journal article" date="2000" name="Science">
        <title>The genome sequence of Drosophila melanogaster.</title>
        <authorList>
            <person name="Adams M.D."/>
            <person name="Celniker S.E."/>
            <person name="Holt R.A."/>
            <person name="Evans C.A."/>
            <person name="Gocayne J.D."/>
            <person name="Amanatides P.G."/>
            <person name="Scherer S.E."/>
            <person name="Li P.W."/>
            <person name="Hoskins R.A."/>
            <person name="Galle R.F."/>
            <person name="George R.A."/>
            <person name="Lewis S.E."/>
            <person name="Richards S."/>
            <person name="Ashburner M."/>
            <person name="Henderson S.N."/>
            <person name="Sutton G.G."/>
            <person name="Wortman J.R."/>
            <person name="Yandell M.D."/>
            <person name="Zhang Q."/>
            <person name="Chen L.X."/>
            <person name="Brandon R.C."/>
            <person name="Rogers Y.-H.C."/>
            <person name="Blazej R.G."/>
            <person name="Champe M."/>
            <person name="Pfeiffer B.D."/>
            <person name="Wan K.H."/>
            <person name="Doyle C."/>
            <person name="Baxter E.G."/>
            <person name="Helt G."/>
            <person name="Nelson C.R."/>
            <person name="Miklos G.L.G."/>
            <person name="Abril J.F."/>
            <person name="Agbayani A."/>
            <person name="An H.-J."/>
            <person name="Andrews-Pfannkoch C."/>
            <person name="Baldwin D."/>
            <person name="Ballew R.M."/>
            <person name="Basu A."/>
            <person name="Baxendale J."/>
            <person name="Bayraktaroglu L."/>
            <person name="Beasley E.M."/>
            <person name="Beeson K.Y."/>
            <person name="Benos P.V."/>
            <person name="Berman B.P."/>
            <person name="Bhandari D."/>
            <person name="Bolshakov S."/>
            <person name="Borkova D."/>
            <person name="Botchan M.R."/>
            <person name="Bouck J."/>
            <person name="Brokstein P."/>
            <person name="Brottier P."/>
            <person name="Burtis K.C."/>
            <person name="Busam D.A."/>
            <person name="Butler H."/>
            <person name="Cadieu E."/>
            <person name="Center A."/>
            <person name="Chandra I."/>
            <person name="Cherry J.M."/>
            <person name="Cawley S."/>
            <person name="Dahlke C."/>
            <person name="Davenport L.B."/>
            <person name="Davies P."/>
            <person name="de Pablos B."/>
            <person name="Delcher A."/>
            <person name="Deng Z."/>
            <person name="Mays A.D."/>
            <person name="Dew I."/>
            <person name="Dietz S.M."/>
            <person name="Dodson K."/>
            <person name="Doup L.E."/>
            <person name="Downes M."/>
            <person name="Dugan-Rocha S."/>
            <person name="Dunkov B.C."/>
            <person name="Dunn P."/>
            <person name="Durbin K.J."/>
            <person name="Evangelista C.C."/>
            <person name="Ferraz C."/>
            <person name="Ferriera S."/>
            <person name="Fleischmann W."/>
            <person name="Fosler C."/>
            <person name="Gabrielian A.E."/>
            <person name="Garg N.S."/>
            <person name="Gelbart W.M."/>
            <person name="Glasser K."/>
            <person name="Glodek A."/>
            <person name="Gong F."/>
            <person name="Gorrell J.H."/>
            <person name="Gu Z."/>
            <person name="Guan P."/>
            <person name="Harris M."/>
            <person name="Harris N.L."/>
            <person name="Harvey D.A."/>
            <person name="Heiman T.J."/>
            <person name="Hernandez J.R."/>
            <person name="Houck J."/>
            <person name="Hostin D."/>
            <person name="Houston K.A."/>
            <person name="Howland T.J."/>
            <person name="Wei M.-H."/>
            <person name="Ibegwam C."/>
            <person name="Jalali M."/>
            <person name="Kalush F."/>
            <person name="Karpen G.H."/>
            <person name="Ke Z."/>
            <person name="Kennison J.A."/>
            <person name="Ketchum K.A."/>
            <person name="Kimmel B.E."/>
            <person name="Kodira C.D."/>
            <person name="Kraft C.L."/>
            <person name="Kravitz S."/>
            <person name="Kulp D."/>
            <person name="Lai Z."/>
            <person name="Lasko P."/>
            <person name="Lei Y."/>
            <person name="Levitsky A.A."/>
            <person name="Li J.H."/>
            <person name="Li Z."/>
            <person name="Liang Y."/>
            <person name="Lin X."/>
            <person name="Liu X."/>
            <person name="Mattei B."/>
            <person name="McIntosh T.C."/>
            <person name="McLeod M.P."/>
            <person name="McPherson D."/>
            <person name="Merkulov G."/>
            <person name="Milshina N.V."/>
            <person name="Mobarry C."/>
            <person name="Morris J."/>
            <person name="Moshrefi A."/>
            <person name="Mount S.M."/>
            <person name="Moy M."/>
            <person name="Murphy B."/>
            <person name="Murphy L."/>
            <person name="Muzny D.M."/>
            <person name="Nelson D.L."/>
            <person name="Nelson D.R."/>
            <person name="Nelson K.A."/>
            <person name="Nixon K."/>
            <person name="Nusskern D.R."/>
            <person name="Pacleb J.M."/>
            <person name="Palazzolo M."/>
            <person name="Pittman G.S."/>
            <person name="Pan S."/>
            <person name="Pollard J."/>
            <person name="Puri V."/>
            <person name="Reese M.G."/>
            <person name="Reinert K."/>
            <person name="Remington K."/>
            <person name="Saunders R.D.C."/>
            <person name="Scheeler F."/>
            <person name="Shen H."/>
            <person name="Shue B.C."/>
            <person name="Siden-Kiamos I."/>
            <person name="Simpson M."/>
            <person name="Skupski M.P."/>
            <person name="Smith T.J."/>
            <person name="Spier E."/>
            <person name="Spradling A.C."/>
            <person name="Stapleton M."/>
            <person name="Strong R."/>
            <person name="Sun E."/>
            <person name="Svirskas R."/>
            <person name="Tector C."/>
            <person name="Turner R."/>
            <person name="Venter E."/>
            <person name="Wang A.H."/>
            <person name="Wang X."/>
            <person name="Wang Z.-Y."/>
            <person name="Wassarman D.A."/>
            <person name="Weinstock G.M."/>
            <person name="Weissenbach J."/>
            <person name="Williams S.M."/>
            <person name="Woodage T."/>
            <person name="Worley K.C."/>
            <person name="Wu D."/>
            <person name="Yang S."/>
            <person name="Yao Q.A."/>
            <person name="Ye J."/>
            <person name="Yeh R.-F."/>
            <person name="Zaveri J.S."/>
            <person name="Zhan M."/>
            <person name="Zhang G."/>
            <person name="Zhao Q."/>
            <person name="Zheng L."/>
            <person name="Zheng X.H."/>
            <person name="Zhong F.N."/>
            <person name="Zhong W."/>
            <person name="Zhou X."/>
            <person name="Zhu S.C."/>
            <person name="Zhu X."/>
            <person name="Smith H.O."/>
            <person name="Gibbs R.A."/>
            <person name="Myers E.W."/>
            <person name="Rubin G.M."/>
            <person name="Venter J.C."/>
        </authorList>
    </citation>
    <scope>NUCLEOTIDE SEQUENCE [LARGE SCALE GENOMIC DNA]</scope>
    <source>
        <strain evidence="3">Berkeley</strain>
    </source>
</reference>
<reference evidence="5" key="2">
    <citation type="journal article" date="2002" name="Genome Biol.">
        <title>Annotation of the Drosophila melanogaster euchromatic genome: a systematic review.</title>
        <authorList>
            <person name="Misra S."/>
            <person name="Crosby M.A."/>
            <person name="Mungall C.J."/>
            <person name="Matthews B.B."/>
            <person name="Campbell K.S."/>
            <person name="Hradecky P."/>
            <person name="Huang Y."/>
            <person name="Kaminker J.S."/>
            <person name="Millburn G.H."/>
            <person name="Prochnik S.E."/>
            <person name="Smith C.D."/>
            <person name="Tupy J.L."/>
            <person name="Whitfield E.J."/>
            <person name="Bayraktaroglu L."/>
            <person name="Berman B.P."/>
            <person name="Bettencourt B.R."/>
            <person name="Celniker S.E."/>
            <person name="de Grey A.D.N.J."/>
            <person name="Drysdale R.A."/>
            <person name="Harris N.L."/>
            <person name="Richter J."/>
            <person name="Russo S."/>
            <person name="Schroeder A.J."/>
            <person name="Shu S.Q."/>
            <person name="Stapleton M."/>
            <person name="Yamada C."/>
            <person name="Ashburner M."/>
            <person name="Gelbart W.M."/>
            <person name="Rubin G.M."/>
            <person name="Lewis S.E."/>
        </authorList>
    </citation>
    <scope>GENOME REANNOTATION</scope>
    <source>
        <strain>Berkeley</strain>
    </source>
</reference>
<reference evidence="5" key="3">
    <citation type="journal article" date="2000" name="Science">
        <title>Candidate taste receptors in Drosophila.</title>
        <authorList>
            <person name="Clyne P.J."/>
            <person name="Warr C.G."/>
            <person name="Carlson J.R."/>
        </authorList>
    </citation>
    <scope>IDENTIFICATION</scope>
</reference>
<reference evidence="5" key="4">
    <citation type="journal article" date="2001" name="Curr. Biol.">
        <title>Spatially restricted expression of candidate taste receptors in the Drosophila gustatory system.</title>
        <authorList>
            <person name="Dunipace L."/>
            <person name="Meister S."/>
            <person name="McNealy C."/>
            <person name="Amrein H."/>
        </authorList>
    </citation>
    <scope>IDENTIFICATION</scope>
</reference>
<reference key="5">
    <citation type="journal article" date="2011" name="J. Neurosci.">
        <title>Molecular and cellular organization of the taste system in the Drosophila larva.</title>
        <authorList>
            <person name="Kwon J.Y."/>
            <person name="Dahanukar A."/>
            <person name="Weiss L.A."/>
            <person name="Carlson J.R."/>
        </authorList>
    </citation>
    <scope>TISSUE SPECIFICITY</scope>
</reference>
<protein>
    <recommendedName>
        <fullName>Putative gustatory receptor 93c</fullName>
    </recommendedName>
</protein>
<sequence>MIERLKKVSLPALSAFILFCSCHYGRILGVICFDIGQRTSDDSLVVRNRHQFKWFCLSCRLISVTAVCCFCAPYVADIEDPYERLLQCFRLSASLICGICIIVVQVCYEKELLRMIISFLRLFRRVRRLSSLKRIGFGGKREFFLLLFKFICLVYELYSEICQLWHLPDSLSLFATLCEIFLEIGSLMIIHIGFVGYLSVAALYSEVNSFARIELRRQLRSLERPVGGPVGRKQLRIVEYRVDECISVYDEIERVGRTFHRLLELPVLIILLGKIFATTILSYEVIIRPELYARKIGMWGLVVKSFADVILLTLAVHEAVSSSRMMRRLSLENFPITDHKAWHMKWEMFLSRLNFFEFRVRPLGLFEVSNEVILLFLSSMITYFTYVVQYGIQTNRL</sequence>